<sequence>MKNLSAYEVYESPKTSGESRTEAVSEAAFESDPEVSAILVLTSSEASTLERVADLVTAHALYAAHDFCAQAQLAAAELPSRVVARLQEFAWGDMNEGHLLIKGLPQVRSLPPTPTSNVHAVAATTPMSRYQALINECVGRMIAYEAEGHGHTFQDMVPSAMSAHSQTSLGSAVELELHTEQAFSPLRPDFVSLACLRGDPRALTYLFSARQLVATLTTQEIAMLREPMWTTTVDESFLAEGRTFLLGFERGPIPILSGADDDPFIVFDQDLMRGISAPAQELQQTVIRAYYAERVSHCLAPGEMLLIDNRRAVHGRSIFAPRFDGADRFLSRSFIVADGSRSRHARSSFGRVVSARFS</sequence>
<evidence type="ECO:0000250" key="1">
    <source>
        <dbReference type="UniProtKB" id="Q9Z4Z5"/>
    </source>
</evidence>
<evidence type="ECO:0000269" key="2">
    <source ref="2"/>
</evidence>
<evidence type="ECO:0000303" key="3">
    <source ref="2"/>
</evidence>
<evidence type="ECO:0000305" key="4"/>
<evidence type="ECO:0000305" key="5">
    <source ref="2"/>
</evidence>
<evidence type="ECO:0000312" key="6">
    <source>
        <dbReference type="EMBL" id="ACU69184.1"/>
    </source>
</evidence>
<evidence type="ECO:0007829" key="7">
    <source>
        <dbReference type="PDB" id="6F2B"/>
    </source>
</evidence>
<evidence type="ECO:0007829" key="8">
    <source>
        <dbReference type="PDB" id="6F2E"/>
    </source>
</evidence>
<name>LYS3O_CATAD</name>
<feature type="chain" id="PRO_0000435692" description="L-lysine 3-hydroxylase">
    <location>
        <begin position="1"/>
        <end position="358"/>
    </location>
</feature>
<feature type="binding site" evidence="1">
    <location>
        <position position="178"/>
    </location>
    <ligand>
        <name>Fe cation</name>
        <dbReference type="ChEBI" id="CHEBI:24875"/>
    </ligand>
</feature>
<feature type="binding site" evidence="1">
    <location>
        <position position="180"/>
    </location>
    <ligand>
        <name>Fe cation</name>
        <dbReference type="ChEBI" id="CHEBI:24875"/>
    </ligand>
</feature>
<feature type="binding site" evidence="1">
    <location>
        <position position="314"/>
    </location>
    <ligand>
        <name>Fe cation</name>
        <dbReference type="ChEBI" id="CHEBI:24875"/>
    </ligand>
</feature>
<feature type="binding site" evidence="1">
    <location>
        <position position="328"/>
    </location>
    <ligand>
        <name>2-oxoglutarate</name>
        <dbReference type="ChEBI" id="CHEBI:16810"/>
    </ligand>
</feature>
<feature type="helix" evidence="8">
    <location>
        <begin position="35"/>
        <end position="37"/>
    </location>
</feature>
<feature type="strand" evidence="8">
    <location>
        <begin position="38"/>
        <end position="40"/>
    </location>
</feature>
<feature type="helix" evidence="8">
    <location>
        <begin position="43"/>
        <end position="53"/>
    </location>
</feature>
<feature type="turn" evidence="8">
    <location>
        <begin position="60"/>
        <end position="62"/>
    </location>
</feature>
<feature type="helix" evidence="8">
    <location>
        <begin position="64"/>
        <end position="74"/>
    </location>
</feature>
<feature type="helix" evidence="8">
    <location>
        <begin position="75"/>
        <end position="77"/>
    </location>
</feature>
<feature type="helix" evidence="8">
    <location>
        <begin position="80"/>
        <end position="91"/>
    </location>
</feature>
<feature type="strand" evidence="8">
    <location>
        <begin position="98"/>
        <end position="102"/>
    </location>
</feature>
<feature type="strand" evidence="8">
    <location>
        <begin position="115"/>
        <end position="117"/>
    </location>
</feature>
<feature type="helix" evidence="8">
    <location>
        <begin position="122"/>
        <end position="124"/>
    </location>
</feature>
<feature type="helix" evidence="8">
    <location>
        <begin position="126"/>
        <end position="138"/>
    </location>
</feature>
<feature type="strand" evidence="8">
    <location>
        <begin position="139"/>
        <end position="144"/>
    </location>
</feature>
<feature type="helix" evidence="8">
    <location>
        <begin position="148"/>
        <end position="150"/>
    </location>
</feature>
<feature type="strand" evidence="8">
    <location>
        <begin position="152"/>
        <end position="156"/>
    </location>
</feature>
<feature type="helix" evidence="8">
    <location>
        <begin position="161"/>
        <end position="164"/>
    </location>
</feature>
<feature type="strand" evidence="8">
    <location>
        <begin position="165"/>
        <end position="167"/>
    </location>
</feature>
<feature type="strand" evidence="7">
    <location>
        <begin position="170"/>
        <end position="173"/>
    </location>
</feature>
<feature type="strand" evidence="8">
    <location>
        <begin position="175"/>
        <end position="178"/>
    </location>
</feature>
<feature type="turn" evidence="8">
    <location>
        <begin position="180"/>
        <end position="183"/>
    </location>
</feature>
<feature type="strand" evidence="8">
    <location>
        <begin position="189"/>
        <end position="197"/>
    </location>
</feature>
<feature type="strand" evidence="8">
    <location>
        <begin position="203"/>
        <end position="208"/>
    </location>
</feature>
<feature type="helix" evidence="8">
    <location>
        <begin position="209"/>
        <end position="214"/>
    </location>
</feature>
<feature type="helix" evidence="8">
    <location>
        <begin position="218"/>
        <end position="224"/>
    </location>
</feature>
<feature type="strand" evidence="8">
    <location>
        <begin position="229"/>
        <end position="232"/>
    </location>
</feature>
<feature type="helix" evidence="8">
    <location>
        <begin position="235"/>
        <end position="237"/>
    </location>
</feature>
<feature type="strand" evidence="8">
    <location>
        <begin position="248"/>
        <end position="253"/>
    </location>
</feature>
<feature type="strand" evidence="8">
    <location>
        <begin position="255"/>
        <end position="259"/>
    </location>
</feature>
<feature type="strand" evidence="8">
    <location>
        <begin position="262"/>
        <end position="265"/>
    </location>
</feature>
<feature type="turn" evidence="8">
    <location>
        <begin position="269"/>
        <end position="271"/>
    </location>
</feature>
<feature type="strand" evidence="8">
    <location>
        <begin position="272"/>
        <end position="276"/>
    </location>
</feature>
<feature type="helix" evidence="8">
    <location>
        <begin position="277"/>
        <end position="293"/>
    </location>
</feature>
<feature type="strand" evidence="8">
    <location>
        <begin position="295"/>
        <end position="298"/>
    </location>
</feature>
<feature type="strand" evidence="8">
    <location>
        <begin position="304"/>
        <end position="308"/>
    </location>
</feature>
<feature type="turn" evidence="8">
    <location>
        <begin position="309"/>
        <end position="311"/>
    </location>
</feature>
<feature type="strand" evidence="8">
    <location>
        <begin position="312"/>
        <end position="316"/>
    </location>
</feature>
<feature type="strand" evidence="8">
    <location>
        <begin position="329"/>
        <end position="337"/>
    </location>
</feature>
<feature type="helix" evidence="8">
    <location>
        <begin position="339"/>
        <end position="345"/>
    </location>
</feature>
<feature type="helix" evidence="8">
    <location>
        <begin position="355"/>
        <end position="357"/>
    </location>
</feature>
<comment type="function">
    <text evidence="2">Alpha-ketoglutarate-dependent dioxygenase that in vitro catalyzes the regio- and stereoselective hydroxylation of L-lysine, leading to (3S)-3-hydroxy-L-lysine. Can also use (5R)-5-hydroxy-L-lysine as substrate, but neither D-lysine nor L-ornithine.</text>
</comment>
<comment type="catalytic activity">
    <reaction evidence="2">
        <text>L-lysine + 2-oxoglutarate + O2 = (3S)-3-hydroxy-L-lysine + succinate + CO2</text>
        <dbReference type="Rhea" id="RHEA:40747"/>
        <dbReference type="ChEBI" id="CHEBI:15379"/>
        <dbReference type="ChEBI" id="CHEBI:16526"/>
        <dbReference type="ChEBI" id="CHEBI:16810"/>
        <dbReference type="ChEBI" id="CHEBI:30031"/>
        <dbReference type="ChEBI" id="CHEBI:32551"/>
        <dbReference type="ChEBI" id="CHEBI:77409"/>
    </reaction>
</comment>
<comment type="cofactor">
    <cofactor evidence="1">
        <name>Fe(2+)</name>
        <dbReference type="ChEBI" id="CHEBI:29033"/>
    </cofactor>
    <text evidence="1">Binds 1 Fe(2+) ion per subunit.</text>
</comment>
<comment type="biotechnology">
    <text evidence="5">Being totally regio- and stereoselective, this enzyme is of interest for biocatalytic purposes to produce chiral scaffolds that are of synthetic value in the preparation of more complex functionalized chiral molecules such as natural products and analogs.</text>
</comment>
<comment type="similarity">
    <text evidence="4">Belongs to the clavaminate synthase family.</text>
</comment>
<dbReference type="EC" id="1.14.11.-" evidence="2"/>
<dbReference type="EMBL" id="CP001700">
    <property type="protein sequence ID" value="ACU69184.1"/>
    <property type="molecule type" value="Genomic_DNA"/>
</dbReference>
<dbReference type="RefSeq" id="WP_012784479.1">
    <property type="nucleotide sequence ID" value="NC_013131.1"/>
</dbReference>
<dbReference type="PDB" id="6F2A">
    <property type="method" value="X-ray"/>
    <property type="resolution" value="2.00 A"/>
    <property type="chains" value="A/B/C/D=1-358"/>
</dbReference>
<dbReference type="PDB" id="6F2B">
    <property type="method" value="X-ray"/>
    <property type="resolution" value="2.00 A"/>
    <property type="chains" value="A/B/C/D=1-358"/>
</dbReference>
<dbReference type="PDB" id="6F2E">
    <property type="method" value="X-ray"/>
    <property type="resolution" value="1.90 A"/>
    <property type="chains" value="A/B/C/D=1-358"/>
</dbReference>
<dbReference type="PDB" id="6F6J">
    <property type="method" value="X-ray"/>
    <property type="resolution" value="2.00 A"/>
    <property type="chains" value="A/B/C/D=1-358"/>
</dbReference>
<dbReference type="PDBsum" id="6F2A"/>
<dbReference type="PDBsum" id="6F2B"/>
<dbReference type="PDBsum" id="6F2E"/>
<dbReference type="PDBsum" id="6F6J"/>
<dbReference type="SMR" id="C7QJ42"/>
<dbReference type="STRING" id="479433.Caci_0231"/>
<dbReference type="KEGG" id="cai:Caci_0231"/>
<dbReference type="eggNOG" id="COG2175">
    <property type="taxonomic scope" value="Bacteria"/>
</dbReference>
<dbReference type="HOGENOM" id="CLU_044078_0_0_11"/>
<dbReference type="InParanoid" id="C7QJ42"/>
<dbReference type="OrthoDB" id="3872700at2"/>
<dbReference type="Proteomes" id="UP000000851">
    <property type="component" value="Chromosome"/>
</dbReference>
<dbReference type="GO" id="GO:0016706">
    <property type="term" value="F:2-oxoglutarate-dependent dioxygenase activity"/>
    <property type="evidence" value="ECO:0000314"/>
    <property type="project" value="UniProtKB"/>
</dbReference>
<dbReference type="GO" id="GO:0005506">
    <property type="term" value="F:iron ion binding"/>
    <property type="evidence" value="ECO:0007669"/>
    <property type="project" value="InterPro"/>
</dbReference>
<dbReference type="Gene3D" id="3.60.130.10">
    <property type="entry name" value="Clavaminate synthase-like"/>
    <property type="match status" value="1"/>
</dbReference>
<dbReference type="InterPro" id="IPR014503">
    <property type="entry name" value="Clavaminate_syn-like"/>
</dbReference>
<dbReference type="InterPro" id="IPR042098">
    <property type="entry name" value="TauD-like_sf"/>
</dbReference>
<dbReference type="PIRSF" id="PIRSF019543">
    <property type="entry name" value="Clavaminate_syn"/>
    <property type="match status" value="1"/>
</dbReference>
<dbReference type="SUPFAM" id="SSF51197">
    <property type="entry name" value="Clavaminate synthase-like"/>
    <property type="match status" value="1"/>
</dbReference>
<proteinExistence type="evidence at protein level"/>
<keyword id="KW-0002">3D-structure</keyword>
<keyword id="KW-0223">Dioxygenase</keyword>
<keyword id="KW-0408">Iron</keyword>
<keyword id="KW-0479">Metal-binding</keyword>
<keyword id="KW-0560">Oxidoreductase</keyword>
<keyword id="KW-1185">Reference proteome</keyword>
<gene>
    <name evidence="6" type="ordered locus">Caci_0231</name>
</gene>
<accession>C7QJ42</accession>
<reference key="1">
    <citation type="journal article" date="2009" name="Stand. Genomic Sci.">
        <title>Complete genome sequence of Catenulispora acidiphila type strain (ID 139908).</title>
        <authorList>
            <person name="Copeland A."/>
            <person name="Lapidus A."/>
            <person name="Glavina Del Rio T."/>
            <person name="Nolan M."/>
            <person name="Lucas S."/>
            <person name="Chen F."/>
            <person name="Tice H."/>
            <person name="Cheng J.F."/>
            <person name="Bruce D."/>
            <person name="Goodwin L."/>
            <person name="Pitluck S."/>
            <person name="Mikhailova N."/>
            <person name="Pati A."/>
            <person name="Ivanova N."/>
            <person name="Mavromatis K."/>
            <person name="Chen A."/>
            <person name="Palaniappan K."/>
            <person name="Chain P."/>
            <person name="Land M."/>
            <person name="Hauser L."/>
            <person name="Chang Y.J."/>
            <person name="Jeffries C.D."/>
            <person name="Chertkov O."/>
            <person name="Brettin T."/>
            <person name="Detter J.C."/>
            <person name="Han C."/>
            <person name="Ali Z."/>
            <person name="Tindall B.J."/>
            <person name="Goker M."/>
            <person name="Bristow J."/>
            <person name="Eisen J.A."/>
            <person name="Markowitz V."/>
            <person name="Hugenholtz P."/>
            <person name="Kyrpides N.C."/>
            <person name="Klenk H.P."/>
        </authorList>
    </citation>
    <scope>NUCLEOTIDE SEQUENCE [LARGE SCALE GENOMIC DNA]</scope>
    <source>
        <strain>DSM 44928 / JCM 14897 / NBRC 102108 / NRRL B-24433 / ID139908</strain>
    </source>
</reference>
<reference key="2">
    <citation type="journal article" date="2014" name="ChemCatChem">
        <title>Synthesis of mono- and dihydroxylated amino acids with new alpha-ketoglutarate-dependent dioxygenases: biocatalytic oxidation of C-H bonds.</title>
        <authorList>
            <person name="Baud D."/>
            <person name="Saaidi P.-L."/>
            <person name="Monfleur A."/>
            <person name="Harari M."/>
            <person name="Cuccaro J."/>
            <person name="Fossey A."/>
            <person name="Besnard M."/>
            <person name="Debard A."/>
            <person name="Mariage A."/>
            <person name="Pellouin V."/>
            <person name="Petit J.-L."/>
            <person name="Salanoubat M."/>
            <person name="Weissenbach J."/>
            <person name="de Berardinis V."/>
            <person name="Zaparucha A."/>
        </authorList>
    </citation>
    <scope>FUNCTION</scope>
    <scope>CATALYTIC ACTIVITY</scope>
    <scope>SUBSTRATE SPECIFICITY</scope>
    <scope>BIOTECHNOLOGY</scope>
</reference>
<organism>
    <name type="scientific">Catenulispora acidiphila (strain DSM 44928 / JCM 14897 / NBRC 102108 / NRRL B-24433 / ID139908)</name>
    <dbReference type="NCBI Taxonomy" id="479433"/>
    <lineage>
        <taxon>Bacteria</taxon>
        <taxon>Bacillati</taxon>
        <taxon>Actinomycetota</taxon>
        <taxon>Actinomycetes</taxon>
        <taxon>Catenulisporales</taxon>
        <taxon>Catenulisporaceae</taxon>
        <taxon>Catenulispora</taxon>
    </lineage>
</organism>
<protein>
    <recommendedName>
        <fullName evidence="5">L-lysine 3-hydroxylase</fullName>
        <ecNumber evidence="2">1.14.11.-</ecNumber>
    </recommendedName>
    <alternativeName>
        <fullName evidence="3">Alpha-ketoglutarate-dependent dioxygenase</fullName>
    </alternativeName>
    <alternativeName>
        <fullName evidence="3">KDO1</fullName>
    </alternativeName>
    <alternativeName>
        <fullName evidence="3">L-lysine hydroxylase</fullName>
    </alternativeName>
</protein>